<accession>Q2U616</accession>
<organism>
    <name type="scientific">Aspergillus oryzae (strain ATCC 42149 / RIB 40)</name>
    <name type="common">Yellow koji mold</name>
    <dbReference type="NCBI Taxonomy" id="510516"/>
    <lineage>
        <taxon>Eukaryota</taxon>
        <taxon>Fungi</taxon>
        <taxon>Dikarya</taxon>
        <taxon>Ascomycota</taxon>
        <taxon>Pezizomycotina</taxon>
        <taxon>Eurotiomycetes</taxon>
        <taxon>Eurotiomycetidae</taxon>
        <taxon>Eurotiales</taxon>
        <taxon>Aspergillaceae</taxon>
        <taxon>Aspergillus</taxon>
        <taxon>Aspergillus subgen. Circumdati</taxon>
    </lineage>
</organism>
<gene>
    <name evidence="5" type="primary">atfB</name>
    <name type="ORF">AO090120000418</name>
</gene>
<proteinExistence type="evidence at transcript level"/>
<feature type="chain" id="PRO_0000444004" description="Basic leucine zipper (bZIP) transcription factor atfB">
    <location>
        <begin position="1"/>
        <end position="318"/>
    </location>
</feature>
<feature type="domain" description="bZIP" evidence="2">
    <location>
        <begin position="160"/>
        <end position="223"/>
    </location>
</feature>
<feature type="region of interest" description="Disordered" evidence="3">
    <location>
        <begin position="114"/>
        <end position="157"/>
    </location>
</feature>
<feature type="region of interest" description="Basic motif" evidence="2">
    <location>
        <begin position="160"/>
        <end position="199"/>
    </location>
</feature>
<feature type="region of interest" description="Leucine-zipper" evidence="2">
    <location>
        <begin position="202"/>
        <end position="216"/>
    </location>
</feature>
<feature type="region of interest" description="Disordered" evidence="3">
    <location>
        <begin position="275"/>
        <end position="301"/>
    </location>
</feature>
<sequence length="318" mass="35944">MSVDQTLYSRTPTAMADPTCAGPAAFTAAGAFSQPDLMAFSLREEEPIWGFDTIAPSMASWQGKMEQQTFCNPNMERGLKNTHVRNGQPTPPPFDDKKLQTPMGEMYPVAQYAFNSSPPEYAPPKHRSSLSEQSQTDGYGVSTRRRKASAIDQCEQQQEREKREKFLERNRLAASKCRQKKKEHTKLLETRFREVSNKKGELESEIEHLRSEVLNLKNEMLRHAQCGDEAIKIHLAQMVRLITSKDTPNRDLVSPMRSPEQMAASTPHGLSFGFDGPMQLPSEMGSPLDQRRDSEQSIMTESSYTFSTDDSFEELINV</sequence>
<comment type="function">
    <text evidence="1 4">Transcription factor that acts as a key player in the regulatory circuit that integrates secondary metabolism and cellular response to oxidative stress (By similarity). Regulates the genes involved in development and stress response through direct binding to their promoters (PubMed:18448366). Particularly involved in the resistance to oxidative stress in asexual conidiospores (PubMed:18448366).</text>
</comment>
<comment type="subcellular location">
    <subcellularLocation>
        <location evidence="2">Nucleus</location>
    </subcellularLocation>
</comment>
<comment type="induction">
    <text evidence="4">Expression is barely detectable at the basal hyphal growth phase but induced during conidial development (PubMed:18448366).</text>
</comment>
<comment type="disruption phenotype">
    <text evidence="4">Leads to weak conidia formation on hyperosmotic medium (PubMed:18448366).</text>
</comment>
<comment type="similarity">
    <text evidence="6">Belongs to the bZIP family. ATF subfamily.</text>
</comment>
<protein>
    <recommendedName>
        <fullName evidence="5">Basic leucine zipper (bZIP) transcription factor atfB</fullName>
    </recommendedName>
</protein>
<reference key="1">
    <citation type="journal article" date="2005" name="Nature">
        <title>Genome sequencing and analysis of Aspergillus oryzae.</title>
        <authorList>
            <person name="Machida M."/>
            <person name="Asai K."/>
            <person name="Sano M."/>
            <person name="Tanaka T."/>
            <person name="Kumagai T."/>
            <person name="Terai G."/>
            <person name="Kusumoto K."/>
            <person name="Arima T."/>
            <person name="Akita O."/>
            <person name="Kashiwagi Y."/>
            <person name="Abe K."/>
            <person name="Gomi K."/>
            <person name="Horiuchi H."/>
            <person name="Kitamoto K."/>
            <person name="Kobayashi T."/>
            <person name="Takeuchi M."/>
            <person name="Denning D.W."/>
            <person name="Galagan J.E."/>
            <person name="Nierman W.C."/>
            <person name="Yu J."/>
            <person name="Archer D.B."/>
            <person name="Bennett J.W."/>
            <person name="Bhatnagar D."/>
            <person name="Cleveland T.E."/>
            <person name="Fedorova N.D."/>
            <person name="Gotoh O."/>
            <person name="Horikawa H."/>
            <person name="Hosoyama A."/>
            <person name="Ichinomiya M."/>
            <person name="Igarashi R."/>
            <person name="Iwashita K."/>
            <person name="Juvvadi P.R."/>
            <person name="Kato M."/>
            <person name="Kato Y."/>
            <person name="Kin T."/>
            <person name="Kokubun A."/>
            <person name="Maeda H."/>
            <person name="Maeyama N."/>
            <person name="Maruyama J."/>
            <person name="Nagasaki H."/>
            <person name="Nakajima T."/>
            <person name="Oda K."/>
            <person name="Okada K."/>
            <person name="Paulsen I."/>
            <person name="Sakamoto K."/>
            <person name="Sawano T."/>
            <person name="Takahashi M."/>
            <person name="Takase K."/>
            <person name="Terabayashi Y."/>
            <person name="Wortman J.R."/>
            <person name="Yamada O."/>
            <person name="Yamagata Y."/>
            <person name="Anazawa H."/>
            <person name="Hata Y."/>
            <person name="Koide Y."/>
            <person name="Komori T."/>
            <person name="Koyama Y."/>
            <person name="Minetoki T."/>
            <person name="Suharnan S."/>
            <person name="Tanaka A."/>
            <person name="Isono K."/>
            <person name="Kuhara S."/>
            <person name="Ogasawara N."/>
            <person name="Kikuchi H."/>
        </authorList>
    </citation>
    <scope>NUCLEOTIDE SEQUENCE [LARGE SCALE GENOMIC DNA]</scope>
    <source>
        <strain>ATCC 42149 / RIB 40</strain>
    </source>
</reference>
<reference key="2">
    <citation type="journal article" date="2008" name="Fungal Genet. Biol.">
        <title>Aspergillus oryzae atfB encodes a transcription factor required for stress tolerance in conidia.</title>
        <authorList>
            <person name="Sakamoto K."/>
            <person name="Arima T.H."/>
            <person name="Iwashita K."/>
            <person name="Yamada O."/>
            <person name="Gomi K."/>
            <person name="Akita O."/>
        </authorList>
    </citation>
    <scope>FUNCTION</scope>
    <scope>INDUCTION</scope>
    <scope>DISRUPTION PHENOTYPE</scope>
</reference>
<dbReference type="EMBL" id="BA000053">
    <property type="protein sequence ID" value="BAE62999.1"/>
    <property type="molecule type" value="Genomic_DNA"/>
</dbReference>
<dbReference type="RefSeq" id="XP_001824132.1">
    <property type="nucleotide sequence ID" value="XM_001824080.2"/>
</dbReference>
<dbReference type="SMR" id="Q2U616"/>
<dbReference type="STRING" id="510516.Q2U616"/>
<dbReference type="EnsemblFungi" id="BAE62999">
    <property type="protein sequence ID" value="BAE62999"/>
    <property type="gene ID" value="AO090120000418"/>
</dbReference>
<dbReference type="GeneID" id="5996391"/>
<dbReference type="KEGG" id="aor:AO090120000418"/>
<dbReference type="VEuPathDB" id="FungiDB:AO090120000418"/>
<dbReference type="HOGENOM" id="CLU_888511_0_0_1"/>
<dbReference type="OMA" id="KHAQCGD"/>
<dbReference type="OrthoDB" id="101169at5052"/>
<dbReference type="Proteomes" id="UP000006564">
    <property type="component" value="Chromosome 5"/>
</dbReference>
<dbReference type="GO" id="GO:0005634">
    <property type="term" value="C:nucleus"/>
    <property type="evidence" value="ECO:0007669"/>
    <property type="project" value="UniProtKB-SubCell"/>
</dbReference>
<dbReference type="GO" id="GO:0003677">
    <property type="term" value="F:DNA binding"/>
    <property type="evidence" value="ECO:0007669"/>
    <property type="project" value="UniProtKB-KW"/>
</dbReference>
<dbReference type="GO" id="GO:0003700">
    <property type="term" value="F:DNA-binding transcription factor activity"/>
    <property type="evidence" value="ECO:0007669"/>
    <property type="project" value="InterPro"/>
</dbReference>
<dbReference type="GO" id="GO:0034605">
    <property type="term" value="P:cellular response to heat"/>
    <property type="evidence" value="ECO:0000315"/>
    <property type="project" value="AspGD"/>
</dbReference>
<dbReference type="GO" id="GO:0070301">
    <property type="term" value="P:cellular response to hydrogen peroxide"/>
    <property type="evidence" value="ECO:0000315"/>
    <property type="project" value="AspGD"/>
</dbReference>
<dbReference type="CDD" id="cd14687">
    <property type="entry name" value="bZIP_ATF2"/>
    <property type="match status" value="1"/>
</dbReference>
<dbReference type="FunFam" id="1.20.5.170:FF:000053">
    <property type="entry name" value="BZIP transcription factor AtfA"/>
    <property type="match status" value="1"/>
</dbReference>
<dbReference type="Gene3D" id="1.20.5.170">
    <property type="match status" value="1"/>
</dbReference>
<dbReference type="InterPro" id="IPR004827">
    <property type="entry name" value="bZIP"/>
</dbReference>
<dbReference type="InterPro" id="IPR046347">
    <property type="entry name" value="bZIP_sf"/>
</dbReference>
<dbReference type="InterPro" id="IPR051027">
    <property type="entry name" value="bZIP_transcription_factors"/>
</dbReference>
<dbReference type="PANTHER" id="PTHR19304">
    <property type="entry name" value="CYCLIC-AMP RESPONSE ELEMENT BINDING PROTEIN"/>
    <property type="match status" value="1"/>
</dbReference>
<dbReference type="Pfam" id="PF00170">
    <property type="entry name" value="bZIP_1"/>
    <property type="match status" value="1"/>
</dbReference>
<dbReference type="SMART" id="SM00338">
    <property type="entry name" value="BRLZ"/>
    <property type="match status" value="1"/>
</dbReference>
<dbReference type="SUPFAM" id="SSF57959">
    <property type="entry name" value="Leucine zipper domain"/>
    <property type="match status" value="1"/>
</dbReference>
<dbReference type="PROSITE" id="PS50217">
    <property type="entry name" value="BZIP"/>
    <property type="match status" value="1"/>
</dbReference>
<dbReference type="PROSITE" id="PS00036">
    <property type="entry name" value="BZIP_BASIC"/>
    <property type="match status" value="1"/>
</dbReference>
<name>ATFB_ASPOR</name>
<evidence type="ECO:0000250" key="1">
    <source>
        <dbReference type="UniProtKB" id="A0A0F0IP79"/>
    </source>
</evidence>
<evidence type="ECO:0000255" key="2">
    <source>
        <dbReference type="PROSITE-ProRule" id="PRU00978"/>
    </source>
</evidence>
<evidence type="ECO:0000256" key="3">
    <source>
        <dbReference type="SAM" id="MobiDB-lite"/>
    </source>
</evidence>
<evidence type="ECO:0000269" key="4">
    <source>
    </source>
</evidence>
<evidence type="ECO:0000303" key="5">
    <source>
    </source>
</evidence>
<evidence type="ECO:0000305" key="6"/>
<keyword id="KW-0238">DNA-binding</keyword>
<keyword id="KW-0539">Nucleus</keyword>
<keyword id="KW-1185">Reference proteome</keyword>
<keyword id="KW-0346">Stress response</keyword>
<keyword id="KW-0804">Transcription</keyword>
<keyword id="KW-0805">Transcription regulation</keyword>